<dbReference type="EC" id="5.4.99.-"/>
<dbReference type="EMBL" id="Z83933">
    <property type="protein sequence ID" value="CAB06297.1"/>
    <property type="molecule type" value="Genomic_DNA"/>
</dbReference>
<dbReference type="EMBL" id="CP001099">
    <property type="protein sequence ID" value="ACF11142.1"/>
    <property type="status" value="ALT_INIT"/>
    <property type="molecule type" value="Genomic_DNA"/>
</dbReference>
<dbReference type="PIR" id="T17190">
    <property type="entry name" value="T17190"/>
</dbReference>
<dbReference type="RefSeq" id="WP_012501975.1">
    <property type="nucleotide sequence ID" value="NC_011027.1"/>
</dbReference>
<dbReference type="SMR" id="O50310"/>
<dbReference type="STRING" id="517417.Cpar_0723"/>
<dbReference type="KEGG" id="cpc:Cpar_0723"/>
<dbReference type="eggNOG" id="COG0564">
    <property type="taxonomic scope" value="Bacteria"/>
</dbReference>
<dbReference type="HOGENOM" id="CLU_016902_4_3_10"/>
<dbReference type="OrthoDB" id="9807829at2"/>
<dbReference type="Proteomes" id="UP000008811">
    <property type="component" value="Chromosome"/>
</dbReference>
<dbReference type="GO" id="GO:0003723">
    <property type="term" value="F:RNA binding"/>
    <property type="evidence" value="ECO:0007669"/>
    <property type="project" value="UniProtKB-KW"/>
</dbReference>
<dbReference type="GO" id="GO:0120159">
    <property type="term" value="F:rRNA pseudouridine synthase activity"/>
    <property type="evidence" value="ECO:0007669"/>
    <property type="project" value="UniProtKB-ARBA"/>
</dbReference>
<dbReference type="GO" id="GO:0000455">
    <property type="term" value="P:enzyme-directed rRNA pseudouridine synthesis"/>
    <property type="evidence" value="ECO:0007669"/>
    <property type="project" value="UniProtKB-ARBA"/>
</dbReference>
<dbReference type="CDD" id="cd02869">
    <property type="entry name" value="PseudoU_synth_RluA_like"/>
    <property type="match status" value="1"/>
</dbReference>
<dbReference type="CDD" id="cd00165">
    <property type="entry name" value="S4"/>
    <property type="match status" value="1"/>
</dbReference>
<dbReference type="Gene3D" id="3.30.2350.10">
    <property type="entry name" value="Pseudouridine synthase"/>
    <property type="match status" value="1"/>
</dbReference>
<dbReference type="Gene3D" id="3.10.290.10">
    <property type="entry name" value="RNA-binding S4 domain"/>
    <property type="match status" value="1"/>
</dbReference>
<dbReference type="InterPro" id="IPR020103">
    <property type="entry name" value="PsdUridine_synth_cat_dom_sf"/>
</dbReference>
<dbReference type="InterPro" id="IPR006224">
    <property type="entry name" value="PsdUridine_synth_RluA-like_CS"/>
</dbReference>
<dbReference type="InterPro" id="IPR006225">
    <property type="entry name" value="PsdUridine_synth_RluC/D"/>
</dbReference>
<dbReference type="InterPro" id="IPR006145">
    <property type="entry name" value="PsdUridine_synth_RsuA/RluA"/>
</dbReference>
<dbReference type="InterPro" id="IPR050188">
    <property type="entry name" value="RluA_PseudoU_synthase"/>
</dbReference>
<dbReference type="InterPro" id="IPR002942">
    <property type="entry name" value="S4_RNA-bd"/>
</dbReference>
<dbReference type="InterPro" id="IPR036986">
    <property type="entry name" value="S4_RNA-bd_sf"/>
</dbReference>
<dbReference type="NCBIfam" id="TIGR00005">
    <property type="entry name" value="rluA_subfam"/>
    <property type="match status" value="1"/>
</dbReference>
<dbReference type="PANTHER" id="PTHR21600">
    <property type="entry name" value="MITOCHONDRIAL RNA PSEUDOURIDINE SYNTHASE"/>
    <property type="match status" value="1"/>
</dbReference>
<dbReference type="PANTHER" id="PTHR21600:SF44">
    <property type="entry name" value="RIBOSOMAL LARGE SUBUNIT PSEUDOURIDINE SYNTHASE D"/>
    <property type="match status" value="1"/>
</dbReference>
<dbReference type="Pfam" id="PF00849">
    <property type="entry name" value="PseudoU_synth_2"/>
    <property type="match status" value="1"/>
</dbReference>
<dbReference type="Pfam" id="PF01479">
    <property type="entry name" value="S4"/>
    <property type="match status" value="1"/>
</dbReference>
<dbReference type="SMART" id="SM00363">
    <property type="entry name" value="S4"/>
    <property type="match status" value="1"/>
</dbReference>
<dbReference type="SUPFAM" id="SSF55174">
    <property type="entry name" value="Alpha-L RNA-binding motif"/>
    <property type="match status" value="1"/>
</dbReference>
<dbReference type="SUPFAM" id="SSF55120">
    <property type="entry name" value="Pseudouridine synthase"/>
    <property type="match status" value="1"/>
</dbReference>
<dbReference type="PROSITE" id="PS01129">
    <property type="entry name" value="PSI_RLU"/>
    <property type="match status" value="1"/>
</dbReference>
<dbReference type="PROSITE" id="PS50889">
    <property type="entry name" value="S4"/>
    <property type="match status" value="1"/>
</dbReference>
<evidence type="ECO:0000250" key="1"/>
<evidence type="ECO:0000255" key="2">
    <source>
        <dbReference type="PROSITE-ProRule" id="PRU00182"/>
    </source>
</evidence>
<evidence type="ECO:0000305" key="3"/>
<name>Y723_CHLP8</name>
<gene>
    <name type="ordered locus">Cpar_0723</name>
</gene>
<proteinExistence type="inferred from homology"/>
<sequence>MTLDVSKVQTPMRIDRYLTQQVENMTRNKVQAAIEEGRVLVNGKPVKSNYRVKSCDHIHLTFLRPPAPELAPEDIPITILYEDDDLMVIDKEAGMVVHPAFGNWTGTLANAILHHLGKDADELDKTEMRPGIVHRLDKDTSGLIIIAKNPTALHKLARQFANRQVEKVYKAIVWGVPKAESGTIKTNIGRSHKNRKVMANFPYEGAEGKHAITDYQVVEDLGYFSLMDVTLHTGRTHQIRVHLQHLGHSILGDETYGGATPRTLPFSKSEPFTRNLLELMSRQALHAQTLRFRQPTTGEPLSFSAPLPEDMELVLEKIRTVMTASQS</sequence>
<keyword id="KW-0413">Isomerase</keyword>
<keyword id="KW-0694">RNA-binding</keyword>
<organism>
    <name type="scientific">Chlorobaculum parvum (strain DSM 263 / NCIMB 8327)</name>
    <name type="common">Chlorobium vibrioforme subsp. thiosulfatophilum</name>
    <dbReference type="NCBI Taxonomy" id="517417"/>
    <lineage>
        <taxon>Bacteria</taxon>
        <taxon>Pseudomonadati</taxon>
        <taxon>Chlorobiota</taxon>
        <taxon>Chlorobiia</taxon>
        <taxon>Chlorobiales</taxon>
        <taxon>Chlorobiaceae</taxon>
        <taxon>Chlorobaculum</taxon>
    </lineage>
</organism>
<feature type="chain" id="PRO_0000162732" description="Uncharacterized RNA pseudouridine synthase Cpar_0723">
    <location>
        <begin position="1"/>
        <end position="327"/>
    </location>
</feature>
<feature type="domain" description="S4 RNA-binding" evidence="2">
    <location>
        <begin position="12"/>
        <end position="84"/>
    </location>
</feature>
<feature type="active site" evidence="1">
    <location>
        <position position="137"/>
    </location>
</feature>
<reference key="1">
    <citation type="journal article" date="1996" name="Hereditas">
        <title>Clustering of genes with function in the biosynthesis of bacteriochlorophyll and heme in the green sulfur bacterium Chlorobium vibrioforme.</title>
        <authorList>
            <person name="Petersen B.L."/>
            <person name="Moeller M.G."/>
            <person name="Stummann B.M."/>
            <person name="Henningsen K.W."/>
        </authorList>
    </citation>
    <scope>NUCLEOTIDE SEQUENCE [GENOMIC DNA]</scope>
</reference>
<reference key="2">
    <citation type="submission" date="2008-06" db="EMBL/GenBank/DDBJ databases">
        <title>Complete sequence of Chlorobaculum parvum NCIB 8327.</title>
        <authorList>
            <consortium name="US DOE Joint Genome Institute"/>
            <person name="Lucas S."/>
            <person name="Copeland A."/>
            <person name="Lapidus A."/>
            <person name="Glavina del Rio T."/>
            <person name="Dalin E."/>
            <person name="Tice H."/>
            <person name="Bruce D."/>
            <person name="Goodwin L."/>
            <person name="Pitluck S."/>
            <person name="Schmutz J."/>
            <person name="Larimer F."/>
            <person name="Land M."/>
            <person name="Hauser L."/>
            <person name="Kyrpides N."/>
            <person name="Mikhailova N."/>
            <person name="Zhao F."/>
            <person name="Li T."/>
            <person name="Liu Z."/>
            <person name="Overmann J."/>
            <person name="Bryant D.A."/>
            <person name="Richardson P."/>
        </authorList>
    </citation>
    <scope>NUCLEOTIDE SEQUENCE [LARGE SCALE GENOMIC DNA]</scope>
    <source>
        <strain>DSM 263 / NCIMB 8327</strain>
    </source>
</reference>
<accession>O50310</accession>
<accession>B3QMI9</accession>
<comment type="catalytic activity">
    <reaction>
        <text>a uridine in RNA = a pseudouridine in RNA</text>
        <dbReference type="Rhea" id="RHEA:48348"/>
        <dbReference type="Rhea" id="RHEA-COMP:12068"/>
        <dbReference type="Rhea" id="RHEA-COMP:12069"/>
        <dbReference type="ChEBI" id="CHEBI:65314"/>
        <dbReference type="ChEBI" id="CHEBI:65315"/>
    </reaction>
</comment>
<comment type="similarity">
    <text evidence="3">Belongs to the pseudouridine synthase RluA family.</text>
</comment>
<comment type="sequence caution" evidence="3">
    <conflict type="erroneous initiation">
        <sequence resource="EMBL-CDS" id="ACF11142"/>
    </conflict>
</comment>
<protein>
    <recommendedName>
        <fullName>Uncharacterized RNA pseudouridine synthase Cpar_0723</fullName>
        <ecNumber>5.4.99.-</ecNumber>
    </recommendedName>
    <alternativeName>
        <fullName>RNA pseudouridylate synthase</fullName>
    </alternativeName>
    <alternativeName>
        <fullName>RNA-uridine isomerase</fullName>
    </alternativeName>
</protein>